<feature type="chain" id="PRO_1000072833" description="Succinylglutamate desuccinylase">
    <location>
        <begin position="1"/>
        <end position="342"/>
    </location>
</feature>
<feature type="active site" evidence="1">
    <location>
        <position position="219"/>
    </location>
</feature>
<feature type="binding site" evidence="1">
    <location>
        <position position="63"/>
    </location>
    <ligand>
        <name>Zn(2+)</name>
        <dbReference type="ChEBI" id="CHEBI:29105"/>
    </ligand>
</feature>
<feature type="binding site" evidence="1">
    <location>
        <position position="66"/>
    </location>
    <ligand>
        <name>Zn(2+)</name>
        <dbReference type="ChEBI" id="CHEBI:29105"/>
    </ligand>
</feature>
<feature type="binding site" evidence="1">
    <location>
        <position position="155"/>
    </location>
    <ligand>
        <name>Zn(2+)</name>
        <dbReference type="ChEBI" id="CHEBI:29105"/>
    </ligand>
</feature>
<sequence>MTKSLFRQSFLFDSLDLDHPMVAQTVRTEQGVTLKLHQRGVLEVIPAQTDAATKNMVISCGVHGDETAPMELLDKWIDDIVSGFQPVAERCLFILAHPQATVRHVRFIEQNLNRLFDDKPHTPSTELAIADNLKVLLKQFFANTDEHSRWHLDLHCAIRGSKHYSFAVSPKARHPVRSRSLMQFIEQAHIEAVMLSNAPSSTFSWYSAEHYAAQALTLELGQVARLGENLLDRLLAFDLAMRDLISRHKPEHLPRKSVMYRVSRTIVRLHDDFDFRFSDDVENFTAFMHGEVFGHDGDKPLMAKNEGEAIVFPNRKVAIGQRAALMVCKVNTRYEDDQLVYD</sequence>
<evidence type="ECO:0000255" key="1">
    <source>
        <dbReference type="HAMAP-Rule" id="MF_00767"/>
    </source>
</evidence>
<gene>
    <name evidence="1" type="primary">astE</name>
    <name type="ordered locus">VC0395_A0863</name>
    <name type="ordered locus">VC395_1361</name>
</gene>
<comment type="function">
    <text evidence="1">Transforms N(2)-succinylglutamate into succinate and glutamate.</text>
</comment>
<comment type="catalytic activity">
    <reaction evidence="1">
        <text>N-succinyl-L-glutamate + H2O = L-glutamate + succinate</text>
        <dbReference type="Rhea" id="RHEA:15169"/>
        <dbReference type="ChEBI" id="CHEBI:15377"/>
        <dbReference type="ChEBI" id="CHEBI:29985"/>
        <dbReference type="ChEBI" id="CHEBI:30031"/>
        <dbReference type="ChEBI" id="CHEBI:58763"/>
        <dbReference type="EC" id="3.5.1.96"/>
    </reaction>
</comment>
<comment type="cofactor">
    <cofactor evidence="1">
        <name>Zn(2+)</name>
        <dbReference type="ChEBI" id="CHEBI:29105"/>
    </cofactor>
    <text evidence="1">Binds 1 zinc ion per subunit.</text>
</comment>
<comment type="pathway">
    <text evidence="1">Amino-acid degradation; L-arginine degradation via AST pathway; L-glutamate and succinate from L-arginine: step 5/5.</text>
</comment>
<comment type="similarity">
    <text evidence="1">Belongs to the AspA/AstE family. Succinylglutamate desuccinylase subfamily.</text>
</comment>
<keyword id="KW-0056">Arginine metabolism</keyword>
<keyword id="KW-0378">Hydrolase</keyword>
<keyword id="KW-0479">Metal-binding</keyword>
<keyword id="KW-0862">Zinc</keyword>
<proteinExistence type="inferred from homology"/>
<reference key="1">
    <citation type="submission" date="2007-03" db="EMBL/GenBank/DDBJ databases">
        <authorList>
            <person name="Heidelberg J."/>
        </authorList>
    </citation>
    <scope>NUCLEOTIDE SEQUENCE [LARGE SCALE GENOMIC DNA]</scope>
    <source>
        <strain>ATCC 39541 / Classical Ogawa 395 / O395</strain>
    </source>
</reference>
<reference key="2">
    <citation type="journal article" date="2008" name="PLoS ONE">
        <title>A recalibrated molecular clock and independent origins for the cholera pandemic clones.</title>
        <authorList>
            <person name="Feng L."/>
            <person name="Reeves P.R."/>
            <person name="Lan R."/>
            <person name="Ren Y."/>
            <person name="Gao C."/>
            <person name="Zhou Z."/>
            <person name="Ren Y."/>
            <person name="Cheng J."/>
            <person name="Wang W."/>
            <person name="Wang J."/>
            <person name="Qian W."/>
            <person name="Li D."/>
            <person name="Wang L."/>
        </authorList>
    </citation>
    <scope>NUCLEOTIDE SEQUENCE [LARGE SCALE GENOMIC DNA]</scope>
    <source>
        <strain>ATCC 39541 / Classical Ogawa 395 / O395</strain>
    </source>
</reference>
<protein>
    <recommendedName>
        <fullName evidence="1">Succinylglutamate desuccinylase</fullName>
        <ecNumber evidence="1">3.5.1.96</ecNumber>
    </recommendedName>
</protein>
<dbReference type="EC" id="3.5.1.96" evidence="1"/>
<dbReference type="EMBL" id="CP000627">
    <property type="protein sequence ID" value="ABQ19642.1"/>
    <property type="molecule type" value="Genomic_DNA"/>
</dbReference>
<dbReference type="EMBL" id="CP001235">
    <property type="protein sequence ID" value="ACP09369.1"/>
    <property type="molecule type" value="Genomic_DNA"/>
</dbReference>
<dbReference type="RefSeq" id="WP_000167428.1">
    <property type="nucleotide sequence ID" value="NZ_JAACZH010000002.1"/>
</dbReference>
<dbReference type="SMR" id="A5F1U8"/>
<dbReference type="KEGG" id="vco:VC0395_A0863"/>
<dbReference type="KEGG" id="vcr:VC395_1361"/>
<dbReference type="PATRIC" id="fig|345073.21.peg.1322"/>
<dbReference type="eggNOG" id="COG2988">
    <property type="taxonomic scope" value="Bacteria"/>
</dbReference>
<dbReference type="HOGENOM" id="CLU_071608_0_0_6"/>
<dbReference type="OrthoDB" id="5290473at2"/>
<dbReference type="UniPathway" id="UPA00185">
    <property type="reaction ID" value="UER00283"/>
</dbReference>
<dbReference type="Proteomes" id="UP000000249">
    <property type="component" value="Chromosome 2"/>
</dbReference>
<dbReference type="GO" id="GO:0016788">
    <property type="term" value="F:hydrolase activity, acting on ester bonds"/>
    <property type="evidence" value="ECO:0007669"/>
    <property type="project" value="UniProtKB-UniRule"/>
</dbReference>
<dbReference type="GO" id="GO:0009017">
    <property type="term" value="F:succinylglutamate desuccinylase activity"/>
    <property type="evidence" value="ECO:0007669"/>
    <property type="project" value="UniProtKB-EC"/>
</dbReference>
<dbReference type="GO" id="GO:0008270">
    <property type="term" value="F:zinc ion binding"/>
    <property type="evidence" value="ECO:0007669"/>
    <property type="project" value="UniProtKB-UniRule"/>
</dbReference>
<dbReference type="GO" id="GO:0019544">
    <property type="term" value="P:arginine catabolic process to glutamate"/>
    <property type="evidence" value="ECO:0007669"/>
    <property type="project" value="UniProtKB-UniRule"/>
</dbReference>
<dbReference type="GO" id="GO:0019545">
    <property type="term" value="P:arginine catabolic process to succinate"/>
    <property type="evidence" value="ECO:0007669"/>
    <property type="project" value="UniProtKB-UniRule"/>
</dbReference>
<dbReference type="CDD" id="cd03855">
    <property type="entry name" value="M14_ASTE"/>
    <property type="match status" value="1"/>
</dbReference>
<dbReference type="Gene3D" id="3.40.630.10">
    <property type="entry name" value="Zn peptidases"/>
    <property type="match status" value="1"/>
</dbReference>
<dbReference type="HAMAP" id="MF_00767">
    <property type="entry name" value="Arg_catab_AstE"/>
    <property type="match status" value="1"/>
</dbReference>
<dbReference type="InterPro" id="IPR050178">
    <property type="entry name" value="AspA/AstE_fam"/>
</dbReference>
<dbReference type="InterPro" id="IPR055438">
    <property type="entry name" value="AstE_AspA_cat"/>
</dbReference>
<dbReference type="InterPro" id="IPR007036">
    <property type="entry name" value="Aste_AspA_hybrid_dom"/>
</dbReference>
<dbReference type="InterPro" id="IPR016681">
    <property type="entry name" value="SuccinylGlu_desuccinylase"/>
</dbReference>
<dbReference type="NCBIfam" id="NF003706">
    <property type="entry name" value="PRK05324.1"/>
    <property type="match status" value="1"/>
</dbReference>
<dbReference type="PANTHER" id="PTHR15162">
    <property type="entry name" value="ASPARTOACYLASE"/>
    <property type="match status" value="1"/>
</dbReference>
<dbReference type="PANTHER" id="PTHR15162:SF7">
    <property type="entry name" value="SUCCINYLGLUTAMATE DESUCCINYLASE"/>
    <property type="match status" value="1"/>
</dbReference>
<dbReference type="Pfam" id="PF24827">
    <property type="entry name" value="AstE_AspA_cat"/>
    <property type="match status" value="1"/>
</dbReference>
<dbReference type="Pfam" id="PF04952">
    <property type="entry name" value="AstE_AspA_hybrid"/>
    <property type="match status" value="1"/>
</dbReference>
<dbReference type="PIRSF" id="PIRSF017020">
    <property type="entry name" value="AstE"/>
    <property type="match status" value="1"/>
</dbReference>
<dbReference type="SUPFAM" id="SSF53187">
    <property type="entry name" value="Zn-dependent exopeptidases"/>
    <property type="match status" value="1"/>
</dbReference>
<organism>
    <name type="scientific">Vibrio cholerae serotype O1 (strain ATCC 39541 / Classical Ogawa 395 / O395)</name>
    <dbReference type="NCBI Taxonomy" id="345073"/>
    <lineage>
        <taxon>Bacteria</taxon>
        <taxon>Pseudomonadati</taxon>
        <taxon>Pseudomonadota</taxon>
        <taxon>Gammaproteobacteria</taxon>
        <taxon>Vibrionales</taxon>
        <taxon>Vibrionaceae</taxon>
        <taxon>Vibrio</taxon>
    </lineage>
</organism>
<accession>A5F1U8</accession>
<accession>C3M003</accession>
<name>ASTE_VIBC3</name>